<gene>
    <name evidence="1" type="primary">proS</name>
    <name type="ordered locus">Z0206</name>
    <name type="ordered locus">ECs0196</name>
</gene>
<sequence>MRTSQYLLSTLKETPADAEVISHQLMLRAGMIRKLASGLYTWLPTGVRVLKKVENIVREEMNNAGAIEVSMPVVQPADLWQESGRWEQYGPELLRFVDRGERPFVLGPTHEEVITDLIRNELSSYKQLPLNFYQIQTKFRDEVRPRFGVMRSREFLMKDAYSFHTSQESLQETYDAMYAAYSKIFSRMGLDFRAVQADTGSIGGSASHEFQVLAQSGEDDVVFSDTSDYAANIELAEAIAPKEPRAAATQEMTLVDTPNAKTIAELVEQFNLPIKKTVKTLLVKAVEGSSFPLVALLVRGDHELNEVKAEKLPQVASPLTFATEEEIRAVVKAGPGSLGPVNMPIPVVIDRTVAAMSDFTAGANIDGKHYFGINWDRDVATPEVADIRNVVAGDPSPDGQGTLLIKRGIEVGHIFQLGTKYSEALKASVQGEDGRNQILTMGCYGIGVTRVVAAAIEQNYDERGIVWPDAIAPFQVAILPMNMHKSFRVQELAEKLYSELRAQGIEVLLDDRKERPGVMFADMELIGIPHTIVLGDRNLDNDDIEYKYRRNGEKQLIKTGDIVEYLVKQIKG</sequence>
<proteinExistence type="inferred from homology"/>
<accession>Q8X8W2</accession>
<accession>Q7AHL1</accession>
<feature type="chain" id="PRO_0000248691" description="Proline--tRNA ligase">
    <location>
        <begin position="1"/>
        <end position="572"/>
    </location>
</feature>
<keyword id="KW-0030">Aminoacyl-tRNA synthetase</keyword>
<keyword id="KW-0067">ATP-binding</keyword>
<keyword id="KW-0963">Cytoplasm</keyword>
<keyword id="KW-0436">Ligase</keyword>
<keyword id="KW-0547">Nucleotide-binding</keyword>
<keyword id="KW-0648">Protein biosynthesis</keyword>
<keyword id="KW-1185">Reference proteome</keyword>
<protein>
    <recommendedName>
        <fullName evidence="1">Proline--tRNA ligase</fullName>
        <ecNumber evidence="1">6.1.1.15</ecNumber>
    </recommendedName>
    <alternativeName>
        <fullName evidence="1">Prolyl-tRNA synthetase</fullName>
        <shortName evidence="1">ProRS</shortName>
    </alternativeName>
</protein>
<reference key="1">
    <citation type="journal article" date="2001" name="Nature">
        <title>Genome sequence of enterohaemorrhagic Escherichia coli O157:H7.</title>
        <authorList>
            <person name="Perna N.T."/>
            <person name="Plunkett G. III"/>
            <person name="Burland V."/>
            <person name="Mau B."/>
            <person name="Glasner J.D."/>
            <person name="Rose D.J."/>
            <person name="Mayhew G.F."/>
            <person name="Evans P.S."/>
            <person name="Gregor J."/>
            <person name="Kirkpatrick H.A."/>
            <person name="Posfai G."/>
            <person name="Hackett J."/>
            <person name="Klink S."/>
            <person name="Boutin A."/>
            <person name="Shao Y."/>
            <person name="Miller L."/>
            <person name="Grotbeck E.J."/>
            <person name="Davis N.W."/>
            <person name="Lim A."/>
            <person name="Dimalanta E.T."/>
            <person name="Potamousis K."/>
            <person name="Apodaca J."/>
            <person name="Anantharaman T.S."/>
            <person name="Lin J."/>
            <person name="Yen G."/>
            <person name="Schwartz D.C."/>
            <person name="Welch R.A."/>
            <person name="Blattner F.R."/>
        </authorList>
    </citation>
    <scope>NUCLEOTIDE SEQUENCE [LARGE SCALE GENOMIC DNA]</scope>
    <source>
        <strain>O157:H7 / EDL933 / ATCC 700927 / EHEC</strain>
    </source>
</reference>
<reference key="2">
    <citation type="journal article" date="2001" name="DNA Res.">
        <title>Complete genome sequence of enterohemorrhagic Escherichia coli O157:H7 and genomic comparison with a laboratory strain K-12.</title>
        <authorList>
            <person name="Hayashi T."/>
            <person name="Makino K."/>
            <person name="Ohnishi M."/>
            <person name="Kurokawa K."/>
            <person name="Ishii K."/>
            <person name="Yokoyama K."/>
            <person name="Han C.-G."/>
            <person name="Ohtsubo E."/>
            <person name="Nakayama K."/>
            <person name="Murata T."/>
            <person name="Tanaka M."/>
            <person name="Tobe T."/>
            <person name="Iida T."/>
            <person name="Takami H."/>
            <person name="Honda T."/>
            <person name="Sasakawa C."/>
            <person name="Ogasawara N."/>
            <person name="Yasunaga T."/>
            <person name="Kuhara S."/>
            <person name="Shiba T."/>
            <person name="Hattori M."/>
            <person name="Shinagawa H."/>
        </authorList>
    </citation>
    <scope>NUCLEOTIDE SEQUENCE [LARGE SCALE GENOMIC DNA]</scope>
    <source>
        <strain>O157:H7 / Sakai / RIMD 0509952 / EHEC</strain>
    </source>
</reference>
<dbReference type="EC" id="6.1.1.15" evidence="1"/>
<dbReference type="EMBL" id="AE005174">
    <property type="protein sequence ID" value="AAG54496.1"/>
    <property type="molecule type" value="Genomic_DNA"/>
</dbReference>
<dbReference type="EMBL" id="BA000007">
    <property type="protein sequence ID" value="BAB33619.1"/>
    <property type="molecule type" value="Genomic_DNA"/>
</dbReference>
<dbReference type="PIR" id="D85504">
    <property type="entry name" value="D85504"/>
</dbReference>
<dbReference type="PIR" id="D90653">
    <property type="entry name" value="D90653"/>
</dbReference>
<dbReference type="RefSeq" id="NP_308223.1">
    <property type="nucleotide sequence ID" value="NC_002695.1"/>
</dbReference>
<dbReference type="RefSeq" id="WP_001260720.1">
    <property type="nucleotide sequence ID" value="NZ_VOAI01000002.1"/>
</dbReference>
<dbReference type="SMR" id="Q8X8W2"/>
<dbReference type="STRING" id="155864.Z0206"/>
<dbReference type="GeneID" id="913939"/>
<dbReference type="KEGG" id="ece:Z0206"/>
<dbReference type="KEGG" id="ecs:ECs_0196"/>
<dbReference type="PATRIC" id="fig|386585.9.peg.300"/>
<dbReference type="eggNOG" id="COG0442">
    <property type="taxonomic scope" value="Bacteria"/>
</dbReference>
<dbReference type="HOGENOM" id="CLU_016739_0_0_6"/>
<dbReference type="OMA" id="NCDYAAN"/>
<dbReference type="Proteomes" id="UP000000558">
    <property type="component" value="Chromosome"/>
</dbReference>
<dbReference type="Proteomes" id="UP000002519">
    <property type="component" value="Chromosome"/>
</dbReference>
<dbReference type="GO" id="GO:0005829">
    <property type="term" value="C:cytosol"/>
    <property type="evidence" value="ECO:0007669"/>
    <property type="project" value="TreeGrafter"/>
</dbReference>
<dbReference type="GO" id="GO:0002161">
    <property type="term" value="F:aminoacyl-tRNA deacylase activity"/>
    <property type="evidence" value="ECO:0007669"/>
    <property type="project" value="InterPro"/>
</dbReference>
<dbReference type="GO" id="GO:0005524">
    <property type="term" value="F:ATP binding"/>
    <property type="evidence" value="ECO:0007669"/>
    <property type="project" value="UniProtKB-UniRule"/>
</dbReference>
<dbReference type="GO" id="GO:0004827">
    <property type="term" value="F:proline-tRNA ligase activity"/>
    <property type="evidence" value="ECO:0007669"/>
    <property type="project" value="UniProtKB-UniRule"/>
</dbReference>
<dbReference type="GO" id="GO:0006433">
    <property type="term" value="P:prolyl-tRNA aminoacylation"/>
    <property type="evidence" value="ECO:0007669"/>
    <property type="project" value="UniProtKB-UniRule"/>
</dbReference>
<dbReference type="CDD" id="cd04334">
    <property type="entry name" value="ProRS-INS"/>
    <property type="match status" value="1"/>
</dbReference>
<dbReference type="CDD" id="cd00861">
    <property type="entry name" value="ProRS_anticodon_short"/>
    <property type="match status" value="1"/>
</dbReference>
<dbReference type="CDD" id="cd00779">
    <property type="entry name" value="ProRS_core_prok"/>
    <property type="match status" value="1"/>
</dbReference>
<dbReference type="FunFam" id="3.30.930.10:FF:000012">
    <property type="entry name" value="Proline--tRNA ligase"/>
    <property type="match status" value="1"/>
</dbReference>
<dbReference type="FunFam" id="3.30.930.10:FF:000097">
    <property type="entry name" value="Proline--tRNA ligase"/>
    <property type="match status" value="1"/>
</dbReference>
<dbReference type="FunFam" id="3.40.50.800:FF:000006">
    <property type="entry name" value="Proline--tRNA ligase"/>
    <property type="match status" value="1"/>
</dbReference>
<dbReference type="FunFam" id="3.90.960.10:FF:000001">
    <property type="entry name" value="Proline--tRNA ligase"/>
    <property type="match status" value="1"/>
</dbReference>
<dbReference type="Gene3D" id="3.40.50.800">
    <property type="entry name" value="Anticodon-binding domain"/>
    <property type="match status" value="1"/>
</dbReference>
<dbReference type="Gene3D" id="3.30.930.10">
    <property type="entry name" value="Bira Bifunctional Protein, Domain 2"/>
    <property type="match status" value="2"/>
</dbReference>
<dbReference type="Gene3D" id="3.90.960.10">
    <property type="entry name" value="YbaK/aminoacyl-tRNA synthetase-associated domain"/>
    <property type="match status" value="1"/>
</dbReference>
<dbReference type="HAMAP" id="MF_01569">
    <property type="entry name" value="Pro_tRNA_synth_type1"/>
    <property type="match status" value="1"/>
</dbReference>
<dbReference type="InterPro" id="IPR002314">
    <property type="entry name" value="aa-tRNA-synt_IIb"/>
</dbReference>
<dbReference type="InterPro" id="IPR006195">
    <property type="entry name" value="aa-tRNA-synth_II"/>
</dbReference>
<dbReference type="InterPro" id="IPR045864">
    <property type="entry name" value="aa-tRNA-synth_II/BPL/LPL"/>
</dbReference>
<dbReference type="InterPro" id="IPR004154">
    <property type="entry name" value="Anticodon-bd"/>
</dbReference>
<dbReference type="InterPro" id="IPR036621">
    <property type="entry name" value="Anticodon-bd_dom_sf"/>
</dbReference>
<dbReference type="InterPro" id="IPR002316">
    <property type="entry name" value="Pro-tRNA-ligase_IIa"/>
</dbReference>
<dbReference type="InterPro" id="IPR004500">
    <property type="entry name" value="Pro-tRNA-synth_IIa_bac-type"/>
</dbReference>
<dbReference type="InterPro" id="IPR023717">
    <property type="entry name" value="Pro-tRNA-Synthase_IIa_type1"/>
</dbReference>
<dbReference type="InterPro" id="IPR050062">
    <property type="entry name" value="Pro-tRNA_synthetase"/>
</dbReference>
<dbReference type="InterPro" id="IPR044140">
    <property type="entry name" value="ProRS_anticodon_short"/>
</dbReference>
<dbReference type="InterPro" id="IPR033730">
    <property type="entry name" value="ProRS_core_prok"/>
</dbReference>
<dbReference type="InterPro" id="IPR036754">
    <property type="entry name" value="YbaK/aa-tRNA-synt-asso_dom_sf"/>
</dbReference>
<dbReference type="InterPro" id="IPR007214">
    <property type="entry name" value="YbaK/aa-tRNA-synth-assoc-dom"/>
</dbReference>
<dbReference type="NCBIfam" id="NF006625">
    <property type="entry name" value="PRK09194.1"/>
    <property type="match status" value="1"/>
</dbReference>
<dbReference type="NCBIfam" id="TIGR00409">
    <property type="entry name" value="proS_fam_II"/>
    <property type="match status" value="1"/>
</dbReference>
<dbReference type="PANTHER" id="PTHR42753">
    <property type="entry name" value="MITOCHONDRIAL RIBOSOME PROTEIN L39/PROLYL-TRNA LIGASE FAMILY MEMBER"/>
    <property type="match status" value="1"/>
</dbReference>
<dbReference type="PANTHER" id="PTHR42753:SF2">
    <property type="entry name" value="PROLINE--TRNA LIGASE"/>
    <property type="match status" value="1"/>
</dbReference>
<dbReference type="Pfam" id="PF03129">
    <property type="entry name" value="HGTP_anticodon"/>
    <property type="match status" value="1"/>
</dbReference>
<dbReference type="Pfam" id="PF00587">
    <property type="entry name" value="tRNA-synt_2b"/>
    <property type="match status" value="1"/>
</dbReference>
<dbReference type="Pfam" id="PF04073">
    <property type="entry name" value="tRNA_edit"/>
    <property type="match status" value="1"/>
</dbReference>
<dbReference type="PIRSF" id="PIRSF001535">
    <property type="entry name" value="ProRS_1"/>
    <property type="match status" value="1"/>
</dbReference>
<dbReference type="PRINTS" id="PR01046">
    <property type="entry name" value="TRNASYNTHPRO"/>
</dbReference>
<dbReference type="SUPFAM" id="SSF52954">
    <property type="entry name" value="Class II aaRS ABD-related"/>
    <property type="match status" value="1"/>
</dbReference>
<dbReference type="SUPFAM" id="SSF55681">
    <property type="entry name" value="Class II aaRS and biotin synthetases"/>
    <property type="match status" value="1"/>
</dbReference>
<dbReference type="SUPFAM" id="SSF55826">
    <property type="entry name" value="YbaK/ProRS associated domain"/>
    <property type="match status" value="1"/>
</dbReference>
<dbReference type="PROSITE" id="PS50862">
    <property type="entry name" value="AA_TRNA_LIGASE_II"/>
    <property type="match status" value="1"/>
</dbReference>
<name>SYP_ECO57</name>
<comment type="function">
    <text evidence="1">Catalyzes the attachment of proline to tRNA(Pro) in a two-step reaction: proline is first activated by ATP to form Pro-AMP and then transferred to the acceptor end of tRNA(Pro). As ProRS can inadvertently accommodate and process non-cognate amino acids such as alanine and cysteine, to avoid such errors it has two additional distinct editing activities against alanine. One activity is designated as 'pretransfer' editing and involves the tRNA(Pro)-independent hydrolysis of activated Ala-AMP. The other activity is designated 'posttransfer' editing and involves deacylation of mischarged Ala-tRNA(Pro). The misacylated Cys-tRNA(Pro) is not edited by ProRS.</text>
</comment>
<comment type="catalytic activity">
    <reaction evidence="1">
        <text>tRNA(Pro) + L-proline + ATP = L-prolyl-tRNA(Pro) + AMP + diphosphate</text>
        <dbReference type="Rhea" id="RHEA:14305"/>
        <dbReference type="Rhea" id="RHEA-COMP:9700"/>
        <dbReference type="Rhea" id="RHEA-COMP:9702"/>
        <dbReference type="ChEBI" id="CHEBI:30616"/>
        <dbReference type="ChEBI" id="CHEBI:33019"/>
        <dbReference type="ChEBI" id="CHEBI:60039"/>
        <dbReference type="ChEBI" id="CHEBI:78442"/>
        <dbReference type="ChEBI" id="CHEBI:78532"/>
        <dbReference type="ChEBI" id="CHEBI:456215"/>
        <dbReference type="EC" id="6.1.1.15"/>
    </reaction>
</comment>
<comment type="subunit">
    <text evidence="1">Homodimer.</text>
</comment>
<comment type="subcellular location">
    <subcellularLocation>
        <location evidence="1">Cytoplasm</location>
    </subcellularLocation>
</comment>
<comment type="domain">
    <text evidence="1">Consists of three domains: the N-terminal catalytic domain, the editing domain and the C-terminal anticodon-binding domain.</text>
</comment>
<comment type="similarity">
    <text evidence="1">Belongs to the class-II aminoacyl-tRNA synthetase family. ProS type 1 subfamily.</text>
</comment>
<evidence type="ECO:0000255" key="1">
    <source>
        <dbReference type="HAMAP-Rule" id="MF_01569"/>
    </source>
</evidence>
<organism>
    <name type="scientific">Escherichia coli O157:H7</name>
    <dbReference type="NCBI Taxonomy" id="83334"/>
    <lineage>
        <taxon>Bacteria</taxon>
        <taxon>Pseudomonadati</taxon>
        <taxon>Pseudomonadota</taxon>
        <taxon>Gammaproteobacteria</taxon>
        <taxon>Enterobacterales</taxon>
        <taxon>Enterobacteriaceae</taxon>
        <taxon>Escherichia</taxon>
    </lineage>
</organism>